<evidence type="ECO:0000255" key="1">
    <source>
        <dbReference type="PROSITE-ProRule" id="PRU00303"/>
    </source>
</evidence>
<evidence type="ECO:0000269" key="2">
    <source>
    </source>
</evidence>
<evidence type="ECO:0000305" key="3"/>
<protein>
    <recommendedName>
        <fullName>Outer membrane lipoprotein pcp</fullName>
    </recommendedName>
    <alternativeName>
        <fullName>15 kDa lipoprotein</fullName>
    </alternativeName>
    <alternativeName>
        <fullName>PAL cross-reacting lipoprotein</fullName>
    </alternativeName>
</protein>
<proteinExistence type="evidence at protein level"/>
<name>PCP_HAEIN</name>
<dbReference type="EMBL" id="M18877">
    <property type="protein sequence ID" value="AAA24938.1"/>
    <property type="molecule type" value="mRNA"/>
</dbReference>
<dbReference type="EMBL" id="L42023">
    <property type="protein sequence ID" value="AAC23228.1"/>
    <property type="molecule type" value="Genomic_DNA"/>
</dbReference>
<dbReference type="PIR" id="I64130">
    <property type="entry name" value="I64130"/>
</dbReference>
<dbReference type="RefSeq" id="NP_439725.1">
    <property type="nucleotide sequence ID" value="NC_000907.1"/>
</dbReference>
<dbReference type="SMR" id="P10325"/>
<dbReference type="STRING" id="71421.HI_1579"/>
<dbReference type="EnsemblBacteria" id="AAC23228">
    <property type="protein sequence ID" value="AAC23228"/>
    <property type="gene ID" value="HI_1579"/>
</dbReference>
<dbReference type="KEGG" id="hin:HI_1579"/>
<dbReference type="PATRIC" id="fig|71421.8.peg.1652"/>
<dbReference type="eggNOG" id="COG3133">
    <property type="taxonomic scope" value="Bacteria"/>
</dbReference>
<dbReference type="HOGENOM" id="CLU_090265_3_1_6"/>
<dbReference type="OrthoDB" id="5298161at2"/>
<dbReference type="PhylomeDB" id="P10325"/>
<dbReference type="BioCyc" id="HINF71421:G1GJ1-1597-MONOMER"/>
<dbReference type="Proteomes" id="UP000000579">
    <property type="component" value="Chromosome"/>
</dbReference>
<dbReference type="GO" id="GO:0009279">
    <property type="term" value="C:cell outer membrane"/>
    <property type="evidence" value="ECO:0000318"/>
    <property type="project" value="GO_Central"/>
</dbReference>
<dbReference type="InterPro" id="IPR051407">
    <property type="entry name" value="Bact_OM_lipoprot/Surf_antigen"/>
</dbReference>
<dbReference type="InterPro" id="IPR008816">
    <property type="entry name" value="Gly_zipper_2TM_dom"/>
</dbReference>
<dbReference type="PANTHER" id="PTHR35603">
    <property type="match status" value="1"/>
</dbReference>
<dbReference type="PANTHER" id="PTHR35603:SF1">
    <property type="entry name" value="OUTER MEMBRANE LIPOPROTEIN SLYB"/>
    <property type="match status" value="1"/>
</dbReference>
<dbReference type="Pfam" id="PF05433">
    <property type="entry name" value="Rick_17kDa_Anti"/>
    <property type="match status" value="1"/>
</dbReference>
<dbReference type="PROSITE" id="PS51257">
    <property type="entry name" value="PROKAR_LIPOPROTEIN"/>
    <property type="match status" value="1"/>
</dbReference>
<reference key="1">
    <citation type="journal article" date="1988" name="J. Bacteriol.">
        <title>Cloning of genes encoding a 15,000-dalton peptidoglycan-associated outer membrane lipoprotein and an antigenically related 15,000-dalton protein from Haemophilus influenzae.</title>
        <authorList>
            <person name="Deich R.A."/>
            <person name="Metcalf B.J."/>
            <person name="Finn C.W."/>
            <person name="Farley J.E."/>
            <person name="Green B.A."/>
        </authorList>
    </citation>
    <scope>NUCLEOTIDE SEQUENCE [GENOMIC DNA]</scope>
    <scope>DIACYLGLYCEROL AT CYS-19</scope>
    <scope>PALMITOYLATION AT CYS-19</scope>
</reference>
<reference key="2">
    <citation type="journal article" date="1995" name="Science">
        <title>Whole-genome random sequencing and assembly of Haemophilus influenzae Rd.</title>
        <authorList>
            <person name="Fleischmann R.D."/>
            <person name="Adams M.D."/>
            <person name="White O."/>
            <person name="Clayton R.A."/>
            <person name="Kirkness E.F."/>
            <person name="Kerlavage A.R."/>
            <person name="Bult C.J."/>
            <person name="Tomb J.-F."/>
            <person name="Dougherty B.A."/>
            <person name="Merrick J.M."/>
            <person name="McKenney K."/>
            <person name="Sutton G.G."/>
            <person name="FitzHugh W."/>
            <person name="Fields C.A."/>
            <person name="Gocayne J.D."/>
            <person name="Scott J.D."/>
            <person name="Shirley R."/>
            <person name="Liu L.-I."/>
            <person name="Glodek A."/>
            <person name="Kelley J.M."/>
            <person name="Weidman J.F."/>
            <person name="Phillips C.A."/>
            <person name="Spriggs T."/>
            <person name="Hedblom E."/>
            <person name="Cotton M.D."/>
            <person name="Utterback T.R."/>
            <person name="Hanna M.C."/>
            <person name="Nguyen D.T."/>
            <person name="Saudek D.M."/>
            <person name="Brandon R.C."/>
            <person name="Fine L.D."/>
            <person name="Fritchman J.L."/>
            <person name="Fuhrmann J.L."/>
            <person name="Geoghagen N.S.M."/>
            <person name="Gnehm C.L."/>
            <person name="McDonald L.A."/>
            <person name="Small K.V."/>
            <person name="Fraser C.M."/>
            <person name="Smith H.O."/>
            <person name="Venter J.C."/>
        </authorList>
    </citation>
    <scope>NUCLEOTIDE SEQUENCE [LARGE SCALE GENOMIC DNA]</scope>
    <source>
        <strain>ATCC 51907 / DSM 11121 / KW20 / Rd</strain>
    </source>
</reference>
<comment type="subcellular location">
    <subcellularLocation>
        <location>Cell outer membrane</location>
        <topology>Lipid-anchor</topology>
    </subcellularLocation>
</comment>
<comment type="similarity">
    <text evidence="3">Belongs to the Pcp/SlyB lipoprotein family.</text>
</comment>
<feature type="signal peptide">
    <location>
        <begin position="1"/>
        <end position="18"/>
    </location>
</feature>
<feature type="chain" id="PRO_0000018159" description="Outer membrane lipoprotein pcp">
    <location>
        <begin position="19"/>
        <end position="155"/>
    </location>
</feature>
<feature type="lipid moiety-binding region" description="N-palmitoyl cysteine" evidence="1 2">
    <location>
        <position position="19"/>
    </location>
</feature>
<feature type="lipid moiety-binding region" description="S-diacylglycerol cysteine" evidence="1 2">
    <location>
        <position position="19"/>
    </location>
</feature>
<feature type="sequence conflict" description="In Ref. 1; AAA24938." evidence="3" ref="1">
    <original>CSLVAEFVF</original>
    <variation>VAGRRVRI</variation>
    <location>
        <begin position="135"/>
        <end position="143"/>
    </location>
</feature>
<accession>P10325</accession>
<organism>
    <name type="scientific">Haemophilus influenzae (strain ATCC 51907 / DSM 11121 / KW20 / Rd)</name>
    <dbReference type="NCBI Taxonomy" id="71421"/>
    <lineage>
        <taxon>Bacteria</taxon>
        <taxon>Pseudomonadati</taxon>
        <taxon>Pseudomonadota</taxon>
        <taxon>Gammaproteobacteria</taxon>
        <taxon>Pasteurellales</taxon>
        <taxon>Pasteurellaceae</taxon>
        <taxon>Haemophilus</taxon>
    </lineage>
</organism>
<gene>
    <name type="primary">pcp</name>
    <name type="synonym">lpp</name>
    <name type="ordered locus">HI_1579</name>
</gene>
<keyword id="KW-0998">Cell outer membrane</keyword>
<keyword id="KW-0449">Lipoprotein</keyword>
<keyword id="KW-0472">Membrane</keyword>
<keyword id="KW-0564">Palmitate</keyword>
<keyword id="KW-1185">Reference proteome</keyword>
<keyword id="KW-0732">Signal</keyword>
<sequence>MKKTNMALALLVAFSVTGCANTDIFSGDVYSASQAKEARSITYGTIVSVRPVKIQADNQGVVGTLGGGALGGIAGSTIGGGRGQAIAAVVGAIGGAIAGSKIEEKMSQVNGAELVIKKDDGQEIVVVQKADSSFCSLVAEFVFVGGGSSLNVSVL</sequence>